<comment type="function">
    <text evidence="1">Specifically methylates the pseudouridine at position 1915 (m3Psi1915) in 23S rRNA.</text>
</comment>
<comment type="catalytic activity">
    <reaction evidence="1">
        <text>pseudouridine(1915) in 23S rRNA + S-adenosyl-L-methionine = N(3)-methylpseudouridine(1915) in 23S rRNA + S-adenosyl-L-homocysteine + H(+)</text>
        <dbReference type="Rhea" id="RHEA:42752"/>
        <dbReference type="Rhea" id="RHEA-COMP:10221"/>
        <dbReference type="Rhea" id="RHEA-COMP:10222"/>
        <dbReference type="ChEBI" id="CHEBI:15378"/>
        <dbReference type="ChEBI" id="CHEBI:57856"/>
        <dbReference type="ChEBI" id="CHEBI:59789"/>
        <dbReference type="ChEBI" id="CHEBI:65314"/>
        <dbReference type="ChEBI" id="CHEBI:74486"/>
        <dbReference type="EC" id="2.1.1.177"/>
    </reaction>
</comment>
<comment type="subunit">
    <text evidence="1">Homodimer.</text>
</comment>
<comment type="subcellular location">
    <subcellularLocation>
        <location evidence="1">Cytoplasm</location>
    </subcellularLocation>
</comment>
<comment type="similarity">
    <text evidence="1">Belongs to the RNA methyltransferase RlmH family.</text>
</comment>
<feature type="chain" id="PRO_1000061858" description="Ribosomal RNA large subunit methyltransferase H">
    <location>
        <begin position="1"/>
        <end position="156"/>
    </location>
</feature>
<feature type="binding site" evidence="1">
    <location>
        <position position="73"/>
    </location>
    <ligand>
        <name>S-adenosyl-L-methionine</name>
        <dbReference type="ChEBI" id="CHEBI:59789"/>
    </ligand>
</feature>
<feature type="binding site" evidence="1">
    <location>
        <position position="104"/>
    </location>
    <ligand>
        <name>S-adenosyl-L-methionine</name>
        <dbReference type="ChEBI" id="CHEBI:59789"/>
    </ligand>
</feature>
<feature type="binding site" evidence="1">
    <location>
        <begin position="123"/>
        <end position="128"/>
    </location>
    <ligand>
        <name>S-adenosyl-L-methionine</name>
        <dbReference type="ChEBI" id="CHEBI:59789"/>
    </ligand>
</feature>
<dbReference type="EC" id="2.1.1.177" evidence="1"/>
<dbReference type="EMBL" id="CP000668">
    <property type="protein sequence ID" value="ABP41014.1"/>
    <property type="molecule type" value="Genomic_DNA"/>
</dbReference>
<dbReference type="RefSeq" id="WP_002210328.1">
    <property type="nucleotide sequence ID" value="NZ_CP009715.1"/>
</dbReference>
<dbReference type="SMR" id="A4TP02"/>
<dbReference type="GeneID" id="57976090"/>
<dbReference type="KEGG" id="ypp:YPDSF_2648"/>
<dbReference type="PATRIC" id="fig|386656.14.peg.4175"/>
<dbReference type="GO" id="GO:0005737">
    <property type="term" value="C:cytoplasm"/>
    <property type="evidence" value="ECO:0007669"/>
    <property type="project" value="UniProtKB-SubCell"/>
</dbReference>
<dbReference type="GO" id="GO:0070038">
    <property type="term" value="F:rRNA (pseudouridine-N3-)-methyltransferase activity"/>
    <property type="evidence" value="ECO:0007669"/>
    <property type="project" value="UniProtKB-UniRule"/>
</dbReference>
<dbReference type="CDD" id="cd18081">
    <property type="entry name" value="RlmH-like"/>
    <property type="match status" value="1"/>
</dbReference>
<dbReference type="FunFam" id="3.40.1280.10:FF:000004">
    <property type="entry name" value="Ribosomal RNA large subunit methyltransferase H"/>
    <property type="match status" value="1"/>
</dbReference>
<dbReference type="Gene3D" id="3.40.1280.10">
    <property type="match status" value="1"/>
</dbReference>
<dbReference type="HAMAP" id="MF_00658">
    <property type="entry name" value="23SrRNA_methyltr_H"/>
    <property type="match status" value="1"/>
</dbReference>
<dbReference type="InterPro" id="IPR029028">
    <property type="entry name" value="Alpha/beta_knot_MTases"/>
</dbReference>
<dbReference type="InterPro" id="IPR003742">
    <property type="entry name" value="RlmH-like"/>
</dbReference>
<dbReference type="InterPro" id="IPR029026">
    <property type="entry name" value="tRNA_m1G_MTases_N"/>
</dbReference>
<dbReference type="NCBIfam" id="NF000984">
    <property type="entry name" value="PRK00103.1-1"/>
    <property type="match status" value="1"/>
</dbReference>
<dbReference type="NCBIfam" id="NF000986">
    <property type="entry name" value="PRK00103.1-4"/>
    <property type="match status" value="1"/>
</dbReference>
<dbReference type="NCBIfam" id="TIGR00246">
    <property type="entry name" value="tRNA_RlmH_YbeA"/>
    <property type="match status" value="1"/>
</dbReference>
<dbReference type="PANTHER" id="PTHR33603">
    <property type="entry name" value="METHYLTRANSFERASE"/>
    <property type="match status" value="1"/>
</dbReference>
<dbReference type="PANTHER" id="PTHR33603:SF1">
    <property type="entry name" value="RIBOSOMAL RNA LARGE SUBUNIT METHYLTRANSFERASE H"/>
    <property type="match status" value="1"/>
</dbReference>
<dbReference type="Pfam" id="PF02590">
    <property type="entry name" value="SPOUT_MTase"/>
    <property type="match status" value="1"/>
</dbReference>
<dbReference type="PIRSF" id="PIRSF004505">
    <property type="entry name" value="MT_bac"/>
    <property type="match status" value="1"/>
</dbReference>
<dbReference type="SUPFAM" id="SSF75217">
    <property type="entry name" value="alpha/beta knot"/>
    <property type="match status" value="1"/>
</dbReference>
<sequence length="156" mass="17520">MKLQLVAVGTKMPDWVQTGFIEYLRRFPKDMPFELAEIPAGKRGKNADIKRILEKEGELMLAAVGKNNRIVTLDIPGTPWETPQLAQQLERWKQDGRDVSLLIGGPEGLAPACKAAAEQSWSLSPLTLPHPLVRVLVAESLYRAWSITTNHPYHRE</sequence>
<keyword id="KW-0963">Cytoplasm</keyword>
<keyword id="KW-0489">Methyltransferase</keyword>
<keyword id="KW-0698">rRNA processing</keyword>
<keyword id="KW-0949">S-adenosyl-L-methionine</keyword>
<keyword id="KW-0808">Transferase</keyword>
<evidence type="ECO:0000255" key="1">
    <source>
        <dbReference type="HAMAP-Rule" id="MF_00658"/>
    </source>
</evidence>
<reference key="1">
    <citation type="submission" date="2007-02" db="EMBL/GenBank/DDBJ databases">
        <title>Complete sequence of chromosome of Yersinia pestis Pestoides F.</title>
        <authorList>
            <consortium name="US DOE Joint Genome Institute"/>
            <person name="Copeland A."/>
            <person name="Lucas S."/>
            <person name="Lapidus A."/>
            <person name="Barry K."/>
            <person name="Detter J.C."/>
            <person name="Glavina del Rio T."/>
            <person name="Hammon N."/>
            <person name="Israni S."/>
            <person name="Dalin E."/>
            <person name="Tice H."/>
            <person name="Pitluck S."/>
            <person name="Di Bartolo G."/>
            <person name="Chain P."/>
            <person name="Malfatti S."/>
            <person name="Shin M."/>
            <person name="Vergez L."/>
            <person name="Schmutz J."/>
            <person name="Larimer F."/>
            <person name="Land M."/>
            <person name="Hauser L."/>
            <person name="Worsham P."/>
            <person name="Chu M."/>
            <person name="Bearden S."/>
            <person name="Garcia E."/>
            <person name="Richardson P."/>
        </authorList>
    </citation>
    <scope>NUCLEOTIDE SEQUENCE [LARGE SCALE GENOMIC DNA]</scope>
    <source>
        <strain>Pestoides F</strain>
    </source>
</reference>
<organism>
    <name type="scientific">Yersinia pestis (strain Pestoides F)</name>
    <dbReference type="NCBI Taxonomy" id="386656"/>
    <lineage>
        <taxon>Bacteria</taxon>
        <taxon>Pseudomonadati</taxon>
        <taxon>Pseudomonadota</taxon>
        <taxon>Gammaproteobacteria</taxon>
        <taxon>Enterobacterales</taxon>
        <taxon>Yersiniaceae</taxon>
        <taxon>Yersinia</taxon>
    </lineage>
</organism>
<proteinExistence type="inferred from homology"/>
<gene>
    <name evidence="1" type="primary">rlmH</name>
    <name type="ordered locus">YPDSF_2648</name>
</gene>
<accession>A4TP02</accession>
<name>RLMH_YERPP</name>
<protein>
    <recommendedName>
        <fullName evidence="1">Ribosomal RNA large subunit methyltransferase H</fullName>
        <ecNumber evidence="1">2.1.1.177</ecNumber>
    </recommendedName>
    <alternativeName>
        <fullName evidence="1">23S rRNA (pseudouridine1915-N3)-methyltransferase</fullName>
    </alternativeName>
    <alternativeName>
        <fullName evidence="1">23S rRNA m3Psi1915 methyltransferase</fullName>
    </alternativeName>
    <alternativeName>
        <fullName evidence="1">rRNA (pseudouridine-N3-)-methyltransferase RlmH</fullName>
    </alternativeName>
</protein>